<organism>
    <name type="scientific">Salmonella typhi</name>
    <dbReference type="NCBI Taxonomy" id="90370"/>
    <lineage>
        <taxon>Bacteria</taxon>
        <taxon>Pseudomonadati</taxon>
        <taxon>Pseudomonadota</taxon>
        <taxon>Gammaproteobacteria</taxon>
        <taxon>Enterobacterales</taxon>
        <taxon>Enterobacteriaceae</taxon>
        <taxon>Salmonella</taxon>
    </lineage>
</organism>
<evidence type="ECO:0000250" key="1"/>
<evidence type="ECO:0000255" key="2">
    <source>
        <dbReference type="PROSITE-ProRule" id="PRU01246"/>
    </source>
</evidence>
<evidence type="ECO:0000255" key="3">
    <source>
        <dbReference type="PROSITE-ProRule" id="PRU01248"/>
    </source>
</evidence>
<evidence type="ECO:0000305" key="4"/>
<keyword id="KW-0131">Cell cycle</keyword>
<keyword id="KW-0132">Cell division</keyword>
<keyword id="KW-0159">Chromosome partition</keyword>
<keyword id="KW-0963">Cytoplasm</keyword>
<keyword id="KW-0229">DNA integration</keyword>
<keyword id="KW-0233">DNA recombination</keyword>
<keyword id="KW-0238">DNA-binding</keyword>
<dbReference type="EMBL" id="AL513382">
    <property type="protein sequence ID" value="CAD02874.1"/>
    <property type="molecule type" value="Genomic_DNA"/>
</dbReference>
<dbReference type="EMBL" id="AE014613">
    <property type="protein sequence ID" value="AAO70514.1"/>
    <property type="molecule type" value="Genomic_DNA"/>
</dbReference>
<dbReference type="RefSeq" id="NP_457442.1">
    <property type="nucleotide sequence ID" value="NC_003198.1"/>
</dbReference>
<dbReference type="RefSeq" id="WP_000434302.1">
    <property type="nucleotide sequence ID" value="NZ_WSUR01000024.1"/>
</dbReference>
<dbReference type="SMR" id="P0A2P7"/>
<dbReference type="STRING" id="220341.gene:17587075"/>
<dbReference type="KEGG" id="stt:t2962"/>
<dbReference type="KEGG" id="sty:STY3200"/>
<dbReference type="PATRIC" id="fig|220341.7.peg.3258"/>
<dbReference type="eggNOG" id="COG4974">
    <property type="taxonomic scope" value="Bacteria"/>
</dbReference>
<dbReference type="HOGENOM" id="CLU_027562_9_0_6"/>
<dbReference type="OMA" id="FWYLIKR"/>
<dbReference type="OrthoDB" id="9801717at2"/>
<dbReference type="Proteomes" id="UP000000541">
    <property type="component" value="Chromosome"/>
</dbReference>
<dbReference type="Proteomes" id="UP000002670">
    <property type="component" value="Chromosome"/>
</dbReference>
<dbReference type="GO" id="GO:0005737">
    <property type="term" value="C:cytoplasm"/>
    <property type="evidence" value="ECO:0007669"/>
    <property type="project" value="UniProtKB-SubCell"/>
</dbReference>
<dbReference type="GO" id="GO:0003677">
    <property type="term" value="F:DNA binding"/>
    <property type="evidence" value="ECO:0007669"/>
    <property type="project" value="UniProtKB-KW"/>
</dbReference>
<dbReference type="GO" id="GO:0009037">
    <property type="term" value="F:tyrosine-based site-specific recombinase activity"/>
    <property type="evidence" value="ECO:0007669"/>
    <property type="project" value="UniProtKB-UniRule"/>
</dbReference>
<dbReference type="GO" id="GO:0051301">
    <property type="term" value="P:cell division"/>
    <property type="evidence" value="ECO:0007669"/>
    <property type="project" value="UniProtKB-KW"/>
</dbReference>
<dbReference type="GO" id="GO:0007059">
    <property type="term" value="P:chromosome segregation"/>
    <property type="evidence" value="ECO:0007669"/>
    <property type="project" value="UniProtKB-UniRule"/>
</dbReference>
<dbReference type="GO" id="GO:0006313">
    <property type="term" value="P:DNA transposition"/>
    <property type="evidence" value="ECO:0007669"/>
    <property type="project" value="UniProtKB-UniRule"/>
</dbReference>
<dbReference type="CDD" id="cd00798">
    <property type="entry name" value="INT_XerDC_C"/>
    <property type="match status" value="1"/>
</dbReference>
<dbReference type="FunFam" id="1.10.150.130:FF:000002">
    <property type="entry name" value="Tyrosine recombinase XerD"/>
    <property type="match status" value="1"/>
</dbReference>
<dbReference type="FunFam" id="1.10.443.10:FF:000001">
    <property type="entry name" value="Tyrosine recombinase XerD"/>
    <property type="match status" value="1"/>
</dbReference>
<dbReference type="Gene3D" id="1.10.150.130">
    <property type="match status" value="1"/>
</dbReference>
<dbReference type="Gene3D" id="1.10.443.10">
    <property type="entry name" value="Intergrase catalytic core"/>
    <property type="match status" value="1"/>
</dbReference>
<dbReference type="HAMAP" id="MF_01808">
    <property type="entry name" value="Recomb_XerC_XerD"/>
    <property type="match status" value="1"/>
</dbReference>
<dbReference type="HAMAP" id="MF_01807">
    <property type="entry name" value="Recomb_XerD"/>
    <property type="match status" value="1"/>
</dbReference>
<dbReference type="InterPro" id="IPR044068">
    <property type="entry name" value="CB"/>
</dbReference>
<dbReference type="InterPro" id="IPR011010">
    <property type="entry name" value="DNA_brk_join_enz"/>
</dbReference>
<dbReference type="InterPro" id="IPR013762">
    <property type="entry name" value="Integrase-like_cat_sf"/>
</dbReference>
<dbReference type="InterPro" id="IPR002104">
    <property type="entry name" value="Integrase_catalytic"/>
</dbReference>
<dbReference type="InterPro" id="IPR010998">
    <property type="entry name" value="Integrase_recombinase_N"/>
</dbReference>
<dbReference type="InterPro" id="IPR004107">
    <property type="entry name" value="Integrase_SAM-like_N"/>
</dbReference>
<dbReference type="InterPro" id="IPR011932">
    <property type="entry name" value="Recomb_XerD"/>
</dbReference>
<dbReference type="InterPro" id="IPR023009">
    <property type="entry name" value="Tyrosine_recombinase_XerC/XerD"/>
</dbReference>
<dbReference type="InterPro" id="IPR050090">
    <property type="entry name" value="Tyrosine_recombinase_XerCD"/>
</dbReference>
<dbReference type="NCBIfam" id="NF001399">
    <property type="entry name" value="PRK00283.1"/>
    <property type="match status" value="1"/>
</dbReference>
<dbReference type="NCBIfam" id="NF040815">
    <property type="entry name" value="recomb_XerA_Arch"/>
    <property type="match status" value="1"/>
</dbReference>
<dbReference type="NCBIfam" id="TIGR02225">
    <property type="entry name" value="recomb_XerD"/>
    <property type="match status" value="1"/>
</dbReference>
<dbReference type="PANTHER" id="PTHR30349">
    <property type="entry name" value="PHAGE INTEGRASE-RELATED"/>
    <property type="match status" value="1"/>
</dbReference>
<dbReference type="PANTHER" id="PTHR30349:SF90">
    <property type="entry name" value="TYROSINE RECOMBINASE XERD"/>
    <property type="match status" value="1"/>
</dbReference>
<dbReference type="Pfam" id="PF02899">
    <property type="entry name" value="Phage_int_SAM_1"/>
    <property type="match status" value="1"/>
</dbReference>
<dbReference type="Pfam" id="PF00589">
    <property type="entry name" value="Phage_integrase"/>
    <property type="match status" value="1"/>
</dbReference>
<dbReference type="SUPFAM" id="SSF56349">
    <property type="entry name" value="DNA breaking-rejoining enzymes"/>
    <property type="match status" value="1"/>
</dbReference>
<dbReference type="SUPFAM" id="SSF47823">
    <property type="entry name" value="lambda integrase-like, N-terminal domain"/>
    <property type="match status" value="1"/>
</dbReference>
<dbReference type="PROSITE" id="PS51900">
    <property type="entry name" value="CB"/>
    <property type="match status" value="1"/>
</dbReference>
<dbReference type="PROSITE" id="PS51898">
    <property type="entry name" value="TYR_RECOMBINASE"/>
    <property type="match status" value="1"/>
</dbReference>
<comment type="function">
    <text evidence="1">Site-specific tyrosine recombinase, which acts by catalyzing the cutting and rejoining of the recombining DNA molecules. Binds cooperatively to specific DNA consensus sequences that are separated from XerC binding sites by a short central region, forming the heterotetrameric XerC-XerD complex that recombines DNA substrates. The complex is essential to convert dimers of the bacterial chromosome into monomers to permit their segregation at cell division. It also contributes to the segregational stability of plasmids. In the complex XerD specifically exchanges the bottom DNA strands (By similarity).</text>
</comment>
<comment type="activity regulation">
    <text evidence="1">FtsK may regulate the catalytic switch between XerC and XerD in the heterotetrameric complex during the two steps of the recombination process.</text>
</comment>
<comment type="subunit">
    <text evidence="1">Forms a cyclic heterotetrameric complex composed of two molecules of XerC and two molecules of XerD, in which XerC interacts with XerD via its C-terminal region, XerD interacts with XerC via its C-terminal region and so on.</text>
</comment>
<comment type="subcellular location">
    <subcellularLocation>
        <location evidence="1">Cytoplasm</location>
    </subcellularLocation>
</comment>
<comment type="similarity">
    <text evidence="4">Belongs to the 'phage' integrase family. XerD subfamily.</text>
</comment>
<name>XERD_SALTI</name>
<sequence>MEQDLARIEQFLDALWLERNLAENTLSAYRRDLSMVVAWLHHRGKTLATAQADDLQTLLAERVEGGYKATSSARLLSAMRRFFQHLYREKYREDDPSAQLASPKLPQRLPKDLSEAQVERLLQAPLIDQPLELRDKAMLEVLYATGLRVSELVGLTMSDISLRQGVVRVIGKGNKERLVPLGEEAVYWLETYLEHGRPWLLNGVSIDVLFPSQRAQQMTRQTFWHRIKHYAVLAGIDSEKLSPHVLRHAFATHLLNHGADLRVVQMLLGHSDLSTTQIYTHVATERLRQLHQQHHPRA</sequence>
<accession>P0A2P7</accession>
<accession>P55889</accession>
<protein>
    <recommendedName>
        <fullName>Tyrosine recombinase XerD</fullName>
    </recommendedName>
</protein>
<gene>
    <name type="primary">xerD</name>
    <name type="ordered locus">STY3200</name>
    <name type="ordered locus">t2962</name>
</gene>
<reference key="1">
    <citation type="journal article" date="2001" name="Nature">
        <title>Complete genome sequence of a multiple drug resistant Salmonella enterica serovar Typhi CT18.</title>
        <authorList>
            <person name="Parkhill J."/>
            <person name="Dougan G."/>
            <person name="James K.D."/>
            <person name="Thomson N.R."/>
            <person name="Pickard D."/>
            <person name="Wain J."/>
            <person name="Churcher C.M."/>
            <person name="Mungall K.L."/>
            <person name="Bentley S.D."/>
            <person name="Holden M.T.G."/>
            <person name="Sebaihia M."/>
            <person name="Baker S."/>
            <person name="Basham D."/>
            <person name="Brooks K."/>
            <person name="Chillingworth T."/>
            <person name="Connerton P."/>
            <person name="Cronin A."/>
            <person name="Davis P."/>
            <person name="Davies R.M."/>
            <person name="Dowd L."/>
            <person name="White N."/>
            <person name="Farrar J."/>
            <person name="Feltwell T."/>
            <person name="Hamlin N."/>
            <person name="Haque A."/>
            <person name="Hien T.T."/>
            <person name="Holroyd S."/>
            <person name="Jagels K."/>
            <person name="Krogh A."/>
            <person name="Larsen T.S."/>
            <person name="Leather S."/>
            <person name="Moule S."/>
            <person name="O'Gaora P."/>
            <person name="Parry C."/>
            <person name="Quail M.A."/>
            <person name="Rutherford K.M."/>
            <person name="Simmonds M."/>
            <person name="Skelton J."/>
            <person name="Stevens K."/>
            <person name="Whitehead S."/>
            <person name="Barrell B.G."/>
        </authorList>
    </citation>
    <scope>NUCLEOTIDE SEQUENCE [LARGE SCALE GENOMIC DNA]</scope>
    <source>
        <strain>CT18</strain>
    </source>
</reference>
<reference key="2">
    <citation type="journal article" date="2003" name="J. Bacteriol.">
        <title>Comparative genomics of Salmonella enterica serovar Typhi strains Ty2 and CT18.</title>
        <authorList>
            <person name="Deng W."/>
            <person name="Liou S.-R."/>
            <person name="Plunkett G. III"/>
            <person name="Mayhew G.F."/>
            <person name="Rose D.J."/>
            <person name="Burland V."/>
            <person name="Kodoyianni V."/>
            <person name="Schwartz D.C."/>
            <person name="Blattner F.R."/>
        </authorList>
    </citation>
    <scope>NUCLEOTIDE SEQUENCE [LARGE SCALE GENOMIC DNA]</scope>
    <source>
        <strain>ATCC 700931 / Ty2</strain>
    </source>
</reference>
<proteinExistence type="inferred from homology"/>
<feature type="chain" id="PRO_0000095412" description="Tyrosine recombinase XerD">
    <location>
        <begin position="1"/>
        <end position="298"/>
    </location>
</feature>
<feature type="domain" description="Core-binding (CB)" evidence="3">
    <location>
        <begin position="2"/>
        <end position="87"/>
    </location>
</feature>
<feature type="domain" description="Tyr recombinase" evidence="2">
    <location>
        <begin position="108"/>
        <end position="292"/>
    </location>
</feature>
<feature type="active site" evidence="2">
    <location>
        <position position="148"/>
    </location>
</feature>
<feature type="active site" evidence="2">
    <location>
        <position position="172"/>
    </location>
</feature>
<feature type="active site" evidence="2">
    <location>
        <position position="244"/>
    </location>
</feature>
<feature type="active site" evidence="2">
    <location>
        <position position="247"/>
    </location>
</feature>
<feature type="active site" evidence="2">
    <location>
        <position position="270"/>
    </location>
</feature>
<feature type="active site" description="O-(3'-phospho-DNA)-tyrosine intermediate" evidence="2">
    <location>
        <position position="279"/>
    </location>
</feature>